<feature type="chain" id="PRO_0000353338" description="DNA-directed RNA polymerase subunit beta'">
    <location>
        <begin position="1"/>
        <end position="1178"/>
    </location>
</feature>
<feature type="binding site" evidence="1">
    <location>
        <position position="60"/>
    </location>
    <ligand>
        <name>Zn(2+)</name>
        <dbReference type="ChEBI" id="CHEBI:29105"/>
        <label>1</label>
    </ligand>
</feature>
<feature type="binding site" evidence="1">
    <location>
        <position position="62"/>
    </location>
    <ligand>
        <name>Zn(2+)</name>
        <dbReference type="ChEBI" id="CHEBI:29105"/>
        <label>1</label>
    </ligand>
</feature>
<feature type="binding site" evidence="1">
    <location>
        <position position="75"/>
    </location>
    <ligand>
        <name>Zn(2+)</name>
        <dbReference type="ChEBI" id="CHEBI:29105"/>
        <label>1</label>
    </ligand>
</feature>
<feature type="binding site" evidence="1">
    <location>
        <position position="78"/>
    </location>
    <ligand>
        <name>Zn(2+)</name>
        <dbReference type="ChEBI" id="CHEBI:29105"/>
        <label>1</label>
    </ligand>
</feature>
<feature type="binding site" evidence="1">
    <location>
        <position position="450"/>
    </location>
    <ligand>
        <name>Mg(2+)</name>
        <dbReference type="ChEBI" id="CHEBI:18420"/>
    </ligand>
</feature>
<feature type="binding site" evidence="1">
    <location>
        <position position="452"/>
    </location>
    <ligand>
        <name>Mg(2+)</name>
        <dbReference type="ChEBI" id="CHEBI:18420"/>
    </ligand>
</feature>
<feature type="binding site" evidence="1">
    <location>
        <position position="454"/>
    </location>
    <ligand>
        <name>Mg(2+)</name>
        <dbReference type="ChEBI" id="CHEBI:18420"/>
    </ligand>
</feature>
<feature type="binding site" evidence="1">
    <location>
        <position position="795"/>
    </location>
    <ligand>
        <name>Zn(2+)</name>
        <dbReference type="ChEBI" id="CHEBI:29105"/>
        <label>2</label>
    </ligand>
</feature>
<feature type="binding site" evidence="1">
    <location>
        <position position="869"/>
    </location>
    <ligand>
        <name>Zn(2+)</name>
        <dbReference type="ChEBI" id="CHEBI:29105"/>
        <label>2</label>
    </ligand>
</feature>
<feature type="binding site" evidence="1">
    <location>
        <position position="876"/>
    </location>
    <ligand>
        <name>Zn(2+)</name>
        <dbReference type="ChEBI" id="CHEBI:29105"/>
        <label>2</label>
    </ligand>
</feature>
<feature type="binding site" evidence="1">
    <location>
        <position position="879"/>
    </location>
    <ligand>
        <name>Zn(2+)</name>
        <dbReference type="ChEBI" id="CHEBI:29105"/>
        <label>2</label>
    </ligand>
</feature>
<proteinExistence type="inferred from homology"/>
<comment type="function">
    <text evidence="1">DNA-dependent RNA polymerase catalyzes the transcription of DNA into RNA using the four ribonucleoside triphosphates as substrates.</text>
</comment>
<comment type="catalytic activity">
    <reaction evidence="1">
        <text>RNA(n) + a ribonucleoside 5'-triphosphate = RNA(n+1) + diphosphate</text>
        <dbReference type="Rhea" id="RHEA:21248"/>
        <dbReference type="Rhea" id="RHEA-COMP:14527"/>
        <dbReference type="Rhea" id="RHEA-COMP:17342"/>
        <dbReference type="ChEBI" id="CHEBI:33019"/>
        <dbReference type="ChEBI" id="CHEBI:61557"/>
        <dbReference type="ChEBI" id="CHEBI:140395"/>
        <dbReference type="EC" id="2.7.7.6"/>
    </reaction>
</comment>
<comment type="cofactor">
    <cofactor evidence="1">
        <name>Mg(2+)</name>
        <dbReference type="ChEBI" id="CHEBI:18420"/>
    </cofactor>
    <text evidence="1">Binds 1 Mg(2+) ion per subunit.</text>
</comment>
<comment type="cofactor">
    <cofactor evidence="1">
        <name>Zn(2+)</name>
        <dbReference type="ChEBI" id="CHEBI:29105"/>
    </cofactor>
    <text evidence="1">Binds 2 Zn(2+) ions per subunit.</text>
</comment>
<comment type="subunit">
    <text evidence="1">The RNAP catalytic core consists of 2 alpha, 1 beta, 1 beta' and 1 omega subunit. When a sigma factor is associated with the core the holoenzyme is formed, which can initiate transcription.</text>
</comment>
<comment type="similarity">
    <text evidence="1">Belongs to the RNA polymerase beta' chain family.</text>
</comment>
<organism>
    <name type="scientific">Clostridium perfringens (strain SM101 / Type A)</name>
    <dbReference type="NCBI Taxonomy" id="289380"/>
    <lineage>
        <taxon>Bacteria</taxon>
        <taxon>Bacillati</taxon>
        <taxon>Bacillota</taxon>
        <taxon>Clostridia</taxon>
        <taxon>Eubacteriales</taxon>
        <taxon>Clostridiaceae</taxon>
        <taxon>Clostridium</taxon>
    </lineage>
</organism>
<accession>Q0SQD7</accession>
<name>RPOC_CLOPS</name>
<protein>
    <recommendedName>
        <fullName evidence="1">DNA-directed RNA polymerase subunit beta'</fullName>
        <shortName evidence="1">RNAP subunit beta'</shortName>
        <ecNumber evidence="1">2.7.7.6</ecNumber>
    </recommendedName>
    <alternativeName>
        <fullName evidence="1">RNA polymerase subunit beta'</fullName>
    </alternativeName>
    <alternativeName>
        <fullName evidence="1">Transcriptase subunit beta'</fullName>
    </alternativeName>
</protein>
<reference key="1">
    <citation type="journal article" date="2006" name="Genome Res.">
        <title>Skewed genomic variability in strains of the toxigenic bacterial pathogen, Clostridium perfringens.</title>
        <authorList>
            <person name="Myers G.S.A."/>
            <person name="Rasko D.A."/>
            <person name="Cheung J.K."/>
            <person name="Ravel J."/>
            <person name="Seshadri R."/>
            <person name="DeBoy R.T."/>
            <person name="Ren Q."/>
            <person name="Varga J."/>
            <person name="Awad M.M."/>
            <person name="Brinkac L.M."/>
            <person name="Daugherty S.C."/>
            <person name="Haft D.H."/>
            <person name="Dodson R.J."/>
            <person name="Madupu R."/>
            <person name="Nelson W.C."/>
            <person name="Rosovitz M.J."/>
            <person name="Sullivan S.A."/>
            <person name="Khouri H."/>
            <person name="Dimitrov G.I."/>
            <person name="Watkins K.L."/>
            <person name="Mulligan S."/>
            <person name="Benton J."/>
            <person name="Radune D."/>
            <person name="Fisher D.J."/>
            <person name="Atkins H.S."/>
            <person name="Hiscox T."/>
            <person name="Jost B.H."/>
            <person name="Billington S.J."/>
            <person name="Songer J.G."/>
            <person name="McClane B.A."/>
            <person name="Titball R.W."/>
            <person name="Rood J.I."/>
            <person name="Melville S.B."/>
            <person name="Paulsen I.T."/>
        </authorList>
    </citation>
    <scope>NUCLEOTIDE SEQUENCE [LARGE SCALE GENOMIC DNA]</scope>
    <source>
        <strain>SM101 / Type A</strain>
    </source>
</reference>
<evidence type="ECO:0000255" key="1">
    <source>
        <dbReference type="HAMAP-Rule" id="MF_01322"/>
    </source>
</evidence>
<gene>
    <name evidence="1" type="primary">rpoC</name>
    <name type="ordered locus">CPR_2407</name>
</gene>
<dbReference type="EC" id="2.7.7.6" evidence="1"/>
<dbReference type="EMBL" id="CP000312">
    <property type="protein sequence ID" value="ABG86016.1"/>
    <property type="molecule type" value="Genomic_DNA"/>
</dbReference>
<dbReference type="RefSeq" id="WP_003460614.1">
    <property type="nucleotide sequence ID" value="NZ_CAXVKH010000004.1"/>
</dbReference>
<dbReference type="SMR" id="Q0SQD7"/>
<dbReference type="GeneID" id="93001002"/>
<dbReference type="KEGG" id="cpr:CPR_2407"/>
<dbReference type="Proteomes" id="UP000001824">
    <property type="component" value="Chromosome"/>
</dbReference>
<dbReference type="GO" id="GO:0000428">
    <property type="term" value="C:DNA-directed RNA polymerase complex"/>
    <property type="evidence" value="ECO:0007669"/>
    <property type="project" value="UniProtKB-KW"/>
</dbReference>
<dbReference type="GO" id="GO:0003677">
    <property type="term" value="F:DNA binding"/>
    <property type="evidence" value="ECO:0007669"/>
    <property type="project" value="UniProtKB-UniRule"/>
</dbReference>
<dbReference type="GO" id="GO:0003899">
    <property type="term" value="F:DNA-directed RNA polymerase activity"/>
    <property type="evidence" value="ECO:0007669"/>
    <property type="project" value="UniProtKB-UniRule"/>
</dbReference>
<dbReference type="GO" id="GO:0000287">
    <property type="term" value="F:magnesium ion binding"/>
    <property type="evidence" value="ECO:0007669"/>
    <property type="project" value="UniProtKB-UniRule"/>
</dbReference>
<dbReference type="GO" id="GO:0008270">
    <property type="term" value="F:zinc ion binding"/>
    <property type="evidence" value="ECO:0007669"/>
    <property type="project" value="UniProtKB-UniRule"/>
</dbReference>
<dbReference type="GO" id="GO:0006351">
    <property type="term" value="P:DNA-templated transcription"/>
    <property type="evidence" value="ECO:0007669"/>
    <property type="project" value="UniProtKB-UniRule"/>
</dbReference>
<dbReference type="CDD" id="cd02655">
    <property type="entry name" value="RNAP_beta'_C"/>
    <property type="match status" value="1"/>
</dbReference>
<dbReference type="CDD" id="cd01609">
    <property type="entry name" value="RNAP_beta'_N"/>
    <property type="match status" value="1"/>
</dbReference>
<dbReference type="FunFam" id="1.10.150.390:FF:000002">
    <property type="entry name" value="DNA-directed RNA polymerase subunit beta"/>
    <property type="match status" value="1"/>
</dbReference>
<dbReference type="FunFam" id="1.10.40.90:FF:000001">
    <property type="entry name" value="DNA-directed RNA polymerase subunit beta"/>
    <property type="match status" value="1"/>
</dbReference>
<dbReference type="FunFam" id="4.10.860.120:FF:000001">
    <property type="entry name" value="DNA-directed RNA polymerase subunit beta"/>
    <property type="match status" value="1"/>
</dbReference>
<dbReference type="Gene3D" id="1.10.132.30">
    <property type="match status" value="1"/>
</dbReference>
<dbReference type="Gene3D" id="1.10.150.390">
    <property type="match status" value="1"/>
</dbReference>
<dbReference type="Gene3D" id="1.10.1790.20">
    <property type="match status" value="1"/>
</dbReference>
<dbReference type="Gene3D" id="1.10.40.90">
    <property type="match status" value="1"/>
</dbReference>
<dbReference type="Gene3D" id="2.40.40.20">
    <property type="match status" value="1"/>
</dbReference>
<dbReference type="Gene3D" id="2.40.50.100">
    <property type="match status" value="1"/>
</dbReference>
<dbReference type="Gene3D" id="4.10.860.120">
    <property type="entry name" value="RNA polymerase II, clamp domain"/>
    <property type="match status" value="1"/>
</dbReference>
<dbReference type="Gene3D" id="1.10.274.100">
    <property type="entry name" value="RNA polymerase Rpb1, domain 3"/>
    <property type="match status" value="1"/>
</dbReference>
<dbReference type="HAMAP" id="MF_01322">
    <property type="entry name" value="RNApol_bact_RpoC"/>
    <property type="match status" value="1"/>
</dbReference>
<dbReference type="InterPro" id="IPR045867">
    <property type="entry name" value="DNA-dir_RpoC_beta_prime"/>
</dbReference>
<dbReference type="InterPro" id="IPR012754">
    <property type="entry name" value="DNA-dir_RpoC_beta_prime_bact"/>
</dbReference>
<dbReference type="InterPro" id="IPR000722">
    <property type="entry name" value="RNA_pol_asu"/>
</dbReference>
<dbReference type="InterPro" id="IPR006592">
    <property type="entry name" value="RNA_pol_N"/>
</dbReference>
<dbReference type="InterPro" id="IPR007080">
    <property type="entry name" value="RNA_pol_Rpb1_1"/>
</dbReference>
<dbReference type="InterPro" id="IPR007066">
    <property type="entry name" value="RNA_pol_Rpb1_3"/>
</dbReference>
<dbReference type="InterPro" id="IPR042102">
    <property type="entry name" value="RNA_pol_Rpb1_3_sf"/>
</dbReference>
<dbReference type="InterPro" id="IPR007083">
    <property type="entry name" value="RNA_pol_Rpb1_4"/>
</dbReference>
<dbReference type="InterPro" id="IPR007081">
    <property type="entry name" value="RNA_pol_Rpb1_5"/>
</dbReference>
<dbReference type="InterPro" id="IPR044893">
    <property type="entry name" value="RNA_pol_Rpb1_clamp_domain"/>
</dbReference>
<dbReference type="InterPro" id="IPR038120">
    <property type="entry name" value="Rpb1_funnel_sf"/>
</dbReference>
<dbReference type="NCBIfam" id="TIGR02386">
    <property type="entry name" value="rpoC_TIGR"/>
    <property type="match status" value="1"/>
</dbReference>
<dbReference type="PANTHER" id="PTHR19376">
    <property type="entry name" value="DNA-DIRECTED RNA POLYMERASE"/>
    <property type="match status" value="1"/>
</dbReference>
<dbReference type="PANTHER" id="PTHR19376:SF54">
    <property type="entry name" value="DNA-DIRECTED RNA POLYMERASE SUBUNIT BETA"/>
    <property type="match status" value="1"/>
</dbReference>
<dbReference type="Pfam" id="PF04997">
    <property type="entry name" value="RNA_pol_Rpb1_1"/>
    <property type="match status" value="1"/>
</dbReference>
<dbReference type="Pfam" id="PF00623">
    <property type="entry name" value="RNA_pol_Rpb1_2"/>
    <property type="match status" value="2"/>
</dbReference>
<dbReference type="Pfam" id="PF04983">
    <property type="entry name" value="RNA_pol_Rpb1_3"/>
    <property type="match status" value="1"/>
</dbReference>
<dbReference type="Pfam" id="PF05000">
    <property type="entry name" value="RNA_pol_Rpb1_4"/>
    <property type="match status" value="1"/>
</dbReference>
<dbReference type="Pfam" id="PF04998">
    <property type="entry name" value="RNA_pol_Rpb1_5"/>
    <property type="match status" value="1"/>
</dbReference>
<dbReference type="SMART" id="SM00663">
    <property type="entry name" value="RPOLA_N"/>
    <property type="match status" value="1"/>
</dbReference>
<dbReference type="SUPFAM" id="SSF64484">
    <property type="entry name" value="beta and beta-prime subunits of DNA dependent RNA-polymerase"/>
    <property type="match status" value="1"/>
</dbReference>
<sequence length="1178" mass="131608">MFELNNFDALQIGLASPEQIREWSRGEVKKPETINYRTLKPERDGLFCERIFGPIKDWECHCGKYKRVRYKGIVCDRCGVEVTKSKVRRERMAHIELAAPVSHIWYFKGIPSRMGLILDMSPRALEKVLYFASYIVIDPKETSLLKKQLLNEKEYREACDKYGEESFVAGMGAEAIKTLLSEIDLERTAAELKEELKQSTGQKKVRIIRRLEVVESFKSSGNKPEWMVVDVIPVIPPDLRPMVQLDGGRFATSDLNDLYRRVINRNNRLKKLLDLGAPDIIVRNEKRMLQEAVDALIDNGRRGRPVTGPGNRPLKSLSDMLKGKQGRFRQNLLGKRVDYSGRSVIVVGPELKMYQCGLPKEMALELFKPFVMKKLVEDGVAHNIKSAKRMVERVMPQVWDVLEEVIADHPVLLNRAPTLHRLGIQAFQPVLVEGRAIKLHPLVCTAYNADFDGDQMAVHVPLSVEAQAEARFLMLAAGNIMKPSDGRPVCVPTQDMVLGSYYLTMDKDGAKGEGKYFASFDEVIMAYQLKEVDIHAKINVKVTKEIDGELKSGIIKTTPGFIIFNECIPQDLGFVNRENPEEMFNLEIDFLITKKSLGKIIDKCYLKHGPTKTSIMLDNIKATGYHYSSIGAVTVAASDMIVPQKKYELLKEADETVDKIEKMYRRGLISEDERYERVIEKWTETTEEVADTLMNSLDKFNPIFMMADSGARGSKSQIKQLAGMRGLMASPSGKIIELPIRASFREGLDVLEYFISTHGARKGNADTALKTADSGYLTRRLVDVSQDVIVREHDCGTQNGIYVEEIKEGSEVVEQLAERLTGRYTAEDVFHPETGELLAAKDTYMDPILAEKIADTGIQKVKIRSVFTCDSKVGVCTKCYGMNMATSYKINIGEAVGIVAAQSIGEPGTQLTMRTFHTGGVAGADITQGLPRVEELFEARKPKGLAIVSEVAGTVRIEETKKKRTVYVVTDSGEEYSYDIPFGSRLKVKDGIAIGAGDEITEGSVNPHDIMSIKGVDGAREYLLSEVQKVYRLQGVDINDKHLEVVVRQMTRKIKVTEQGDTNLLPGVMIDMFDFRAENERVESFGGEKAQGDIVLLGITKAALATDSFLSAASFQETTRVLTDAAIKGKIDPLVGLKENVIIGKLIPAGTGMMKYRSLKLNTENSNQETETIIEIEE</sequence>
<keyword id="KW-0240">DNA-directed RNA polymerase</keyword>
<keyword id="KW-0460">Magnesium</keyword>
<keyword id="KW-0479">Metal-binding</keyword>
<keyword id="KW-0548">Nucleotidyltransferase</keyword>
<keyword id="KW-0804">Transcription</keyword>
<keyword id="KW-0808">Transferase</keyword>
<keyword id="KW-0862">Zinc</keyword>